<feature type="chain" id="PRO_0000197153" description="Esterase FrsA">
    <location>
        <begin position="1"/>
        <end position="414"/>
    </location>
</feature>
<sequence>MTQANLSETLFKPRFKHPETSTLVRRFNHGAQPPVQSALDGKTIPHWYRMINRLMWIWRGIDPREILDVQARIVMSDAERTDDDLYDTVIGYRGGNWIYEWATQAMVWQQKACAEEDPQLSGRHWLHAATLYNIAAYPHLKGDDLAEQAQALSNRAYEEAAQRLPGTMRQMEFTVPGGAPITGFLHMPKGDGPFPTVLMCGGLDAMQTDYYSLYERYFAPRGIAMLTIDMPSVGFSSKWKLTQDSCLLHQRVLKALPNVPWVDHTRVAAFGFRFGANVAVRLAYLESPRLKAVACLGPVVHTLLSDFKCQQQVPEMYLDVLASRLGMHDASDEALRVELNRYSLKVQGLLGRRCPTPMLSGYWKNDPFSPEEDSRLITSSSADGKLLEIPFNPVYRNFDKGLQEITDWIEKRLC</sequence>
<comment type="function">
    <text evidence="1">Catalyzes the hydrolysis of esters.</text>
</comment>
<comment type="catalytic activity">
    <reaction evidence="1">
        <text>a carboxylic ester + H2O = an alcohol + a carboxylate + H(+)</text>
        <dbReference type="Rhea" id="RHEA:21164"/>
        <dbReference type="ChEBI" id="CHEBI:15377"/>
        <dbReference type="ChEBI" id="CHEBI:15378"/>
        <dbReference type="ChEBI" id="CHEBI:29067"/>
        <dbReference type="ChEBI" id="CHEBI:30879"/>
        <dbReference type="ChEBI" id="CHEBI:33308"/>
        <dbReference type="EC" id="3.1.1.1"/>
    </reaction>
</comment>
<comment type="similarity">
    <text evidence="1">Belongs to the FrsA family.</text>
</comment>
<gene>
    <name evidence="1" type="primary">frsA</name>
    <name type="ordered locus">Z0300</name>
    <name type="ordered locus">ECs0266</name>
</gene>
<accession>Q8X7N7</accession>
<evidence type="ECO:0000255" key="1">
    <source>
        <dbReference type="HAMAP-Rule" id="MF_01063"/>
    </source>
</evidence>
<dbReference type="EC" id="3.1.1.1" evidence="1"/>
<dbReference type="EMBL" id="AE005174">
    <property type="protein sequence ID" value="AAG54564.1"/>
    <property type="molecule type" value="Genomic_DNA"/>
</dbReference>
<dbReference type="EMBL" id="BA000007">
    <property type="protein sequence ID" value="BAB33689.1"/>
    <property type="molecule type" value="Genomic_DNA"/>
</dbReference>
<dbReference type="PIR" id="B90662">
    <property type="entry name" value="B90662"/>
</dbReference>
<dbReference type="PIR" id="H85512">
    <property type="entry name" value="H85512"/>
</dbReference>
<dbReference type="RefSeq" id="NP_308293.1">
    <property type="nucleotide sequence ID" value="NC_002695.1"/>
</dbReference>
<dbReference type="RefSeq" id="WP_000189536.1">
    <property type="nucleotide sequence ID" value="NZ_VOAI01000020.1"/>
</dbReference>
<dbReference type="SMR" id="Q8X7N7"/>
<dbReference type="STRING" id="155864.Z0300"/>
<dbReference type="ESTHER" id="ecoli-yafa">
    <property type="family name" value="Duf_1100-R"/>
</dbReference>
<dbReference type="GeneID" id="914364"/>
<dbReference type="KEGG" id="ece:Z0300"/>
<dbReference type="KEGG" id="ecs:ECs_0266"/>
<dbReference type="PATRIC" id="fig|386585.9.peg.368"/>
<dbReference type="eggNOG" id="COG1073">
    <property type="taxonomic scope" value="Bacteria"/>
</dbReference>
<dbReference type="HOGENOM" id="CLU_036819_0_0_6"/>
<dbReference type="OMA" id="NIPWVDH"/>
<dbReference type="Proteomes" id="UP000000558">
    <property type="component" value="Chromosome"/>
</dbReference>
<dbReference type="Proteomes" id="UP000002519">
    <property type="component" value="Chromosome"/>
</dbReference>
<dbReference type="GO" id="GO:0106435">
    <property type="term" value="F:carboxylesterase activity"/>
    <property type="evidence" value="ECO:0007669"/>
    <property type="project" value="UniProtKB-EC"/>
</dbReference>
<dbReference type="FunFam" id="3.40.50.1820:FF:000022">
    <property type="entry name" value="Esterase FrsA"/>
    <property type="match status" value="1"/>
</dbReference>
<dbReference type="Gene3D" id="3.40.50.1820">
    <property type="entry name" value="alpha/beta hydrolase"/>
    <property type="match status" value="1"/>
</dbReference>
<dbReference type="HAMAP" id="MF_01063">
    <property type="entry name" value="FrsA"/>
    <property type="match status" value="1"/>
</dbReference>
<dbReference type="InterPro" id="IPR029058">
    <property type="entry name" value="AB_hydrolase_fold"/>
</dbReference>
<dbReference type="InterPro" id="IPR043423">
    <property type="entry name" value="FrsA"/>
</dbReference>
<dbReference type="InterPro" id="IPR010520">
    <property type="entry name" value="FrsA-like"/>
</dbReference>
<dbReference type="InterPro" id="IPR050261">
    <property type="entry name" value="FrsA_esterase"/>
</dbReference>
<dbReference type="NCBIfam" id="NF003460">
    <property type="entry name" value="PRK05077.1"/>
    <property type="match status" value="1"/>
</dbReference>
<dbReference type="PANTHER" id="PTHR22946">
    <property type="entry name" value="DIENELACTONE HYDROLASE DOMAIN-CONTAINING PROTEIN-RELATED"/>
    <property type="match status" value="1"/>
</dbReference>
<dbReference type="PANTHER" id="PTHR22946:SF4">
    <property type="entry name" value="ESTERASE FRSA"/>
    <property type="match status" value="1"/>
</dbReference>
<dbReference type="Pfam" id="PF06500">
    <property type="entry name" value="FrsA-like"/>
    <property type="match status" value="1"/>
</dbReference>
<dbReference type="SUPFAM" id="SSF53474">
    <property type="entry name" value="alpha/beta-Hydrolases"/>
    <property type="match status" value="1"/>
</dbReference>
<keyword id="KW-0378">Hydrolase</keyword>
<keyword id="KW-1185">Reference proteome</keyword>
<keyword id="KW-0719">Serine esterase</keyword>
<protein>
    <recommendedName>
        <fullName evidence="1">Esterase FrsA</fullName>
        <ecNumber evidence="1">3.1.1.1</ecNumber>
    </recommendedName>
</protein>
<reference key="1">
    <citation type="journal article" date="2001" name="Nature">
        <title>Genome sequence of enterohaemorrhagic Escherichia coli O157:H7.</title>
        <authorList>
            <person name="Perna N.T."/>
            <person name="Plunkett G. III"/>
            <person name="Burland V."/>
            <person name="Mau B."/>
            <person name="Glasner J.D."/>
            <person name="Rose D.J."/>
            <person name="Mayhew G.F."/>
            <person name="Evans P.S."/>
            <person name="Gregor J."/>
            <person name="Kirkpatrick H.A."/>
            <person name="Posfai G."/>
            <person name="Hackett J."/>
            <person name="Klink S."/>
            <person name="Boutin A."/>
            <person name="Shao Y."/>
            <person name="Miller L."/>
            <person name="Grotbeck E.J."/>
            <person name="Davis N.W."/>
            <person name="Lim A."/>
            <person name="Dimalanta E.T."/>
            <person name="Potamousis K."/>
            <person name="Apodaca J."/>
            <person name="Anantharaman T.S."/>
            <person name="Lin J."/>
            <person name="Yen G."/>
            <person name="Schwartz D.C."/>
            <person name="Welch R.A."/>
            <person name="Blattner F.R."/>
        </authorList>
    </citation>
    <scope>NUCLEOTIDE SEQUENCE [LARGE SCALE GENOMIC DNA]</scope>
    <source>
        <strain>O157:H7 / EDL933 / ATCC 700927 / EHEC</strain>
    </source>
</reference>
<reference key="2">
    <citation type="journal article" date="2001" name="DNA Res.">
        <title>Complete genome sequence of enterohemorrhagic Escherichia coli O157:H7 and genomic comparison with a laboratory strain K-12.</title>
        <authorList>
            <person name="Hayashi T."/>
            <person name="Makino K."/>
            <person name="Ohnishi M."/>
            <person name="Kurokawa K."/>
            <person name="Ishii K."/>
            <person name="Yokoyama K."/>
            <person name="Han C.-G."/>
            <person name="Ohtsubo E."/>
            <person name="Nakayama K."/>
            <person name="Murata T."/>
            <person name="Tanaka M."/>
            <person name="Tobe T."/>
            <person name="Iida T."/>
            <person name="Takami H."/>
            <person name="Honda T."/>
            <person name="Sasakawa C."/>
            <person name="Ogasawara N."/>
            <person name="Yasunaga T."/>
            <person name="Kuhara S."/>
            <person name="Shiba T."/>
            <person name="Hattori M."/>
            <person name="Shinagawa H."/>
        </authorList>
    </citation>
    <scope>NUCLEOTIDE SEQUENCE [LARGE SCALE GENOMIC DNA]</scope>
    <source>
        <strain>O157:H7 / Sakai / RIMD 0509952 / EHEC</strain>
    </source>
</reference>
<proteinExistence type="inferred from homology"/>
<name>FRSA_ECO57</name>
<organism>
    <name type="scientific">Escherichia coli O157:H7</name>
    <dbReference type="NCBI Taxonomy" id="83334"/>
    <lineage>
        <taxon>Bacteria</taxon>
        <taxon>Pseudomonadati</taxon>
        <taxon>Pseudomonadota</taxon>
        <taxon>Gammaproteobacteria</taxon>
        <taxon>Enterobacterales</taxon>
        <taxon>Enterobacteriaceae</taxon>
        <taxon>Escherichia</taxon>
    </lineage>
</organism>